<organism>
    <name type="scientific">Dechloromonas aromatica (strain RCB)</name>
    <dbReference type="NCBI Taxonomy" id="159087"/>
    <lineage>
        <taxon>Bacteria</taxon>
        <taxon>Pseudomonadati</taxon>
        <taxon>Pseudomonadota</taxon>
        <taxon>Betaproteobacteria</taxon>
        <taxon>Rhodocyclales</taxon>
        <taxon>Azonexaceae</taxon>
        <taxon>Dechloromonas</taxon>
    </lineage>
</organism>
<keyword id="KW-0687">Ribonucleoprotein</keyword>
<keyword id="KW-0689">Ribosomal protein</keyword>
<name>RS21_DECAR</name>
<feature type="chain" id="PRO_0000266661" description="Small ribosomal subunit protein bS21">
    <location>
        <begin position="1"/>
        <end position="70"/>
    </location>
</feature>
<feature type="region of interest" description="Disordered" evidence="2">
    <location>
        <begin position="43"/>
        <end position="70"/>
    </location>
</feature>
<feature type="compositionally biased region" description="Basic residues" evidence="2">
    <location>
        <begin position="45"/>
        <end position="61"/>
    </location>
</feature>
<evidence type="ECO:0000255" key="1">
    <source>
        <dbReference type="HAMAP-Rule" id="MF_00358"/>
    </source>
</evidence>
<evidence type="ECO:0000256" key="2">
    <source>
        <dbReference type="SAM" id="MobiDB-lite"/>
    </source>
</evidence>
<evidence type="ECO:0000305" key="3"/>
<dbReference type="EMBL" id="CP000089">
    <property type="protein sequence ID" value="AAZ45286.1"/>
    <property type="molecule type" value="Genomic_DNA"/>
</dbReference>
<dbReference type="SMR" id="Q47IP5"/>
<dbReference type="STRING" id="159087.Daro_0529"/>
<dbReference type="KEGG" id="dar:Daro_0529"/>
<dbReference type="eggNOG" id="COG0828">
    <property type="taxonomic scope" value="Bacteria"/>
</dbReference>
<dbReference type="HOGENOM" id="CLU_159258_1_2_4"/>
<dbReference type="OrthoDB" id="9799244at2"/>
<dbReference type="GO" id="GO:1990904">
    <property type="term" value="C:ribonucleoprotein complex"/>
    <property type="evidence" value="ECO:0007669"/>
    <property type="project" value="UniProtKB-KW"/>
</dbReference>
<dbReference type="GO" id="GO:0005840">
    <property type="term" value="C:ribosome"/>
    <property type="evidence" value="ECO:0007669"/>
    <property type="project" value="UniProtKB-KW"/>
</dbReference>
<dbReference type="GO" id="GO:0003735">
    <property type="term" value="F:structural constituent of ribosome"/>
    <property type="evidence" value="ECO:0007669"/>
    <property type="project" value="InterPro"/>
</dbReference>
<dbReference type="GO" id="GO:0006412">
    <property type="term" value="P:translation"/>
    <property type="evidence" value="ECO:0007669"/>
    <property type="project" value="UniProtKB-UniRule"/>
</dbReference>
<dbReference type="Gene3D" id="1.20.5.1150">
    <property type="entry name" value="Ribosomal protein S8"/>
    <property type="match status" value="1"/>
</dbReference>
<dbReference type="HAMAP" id="MF_00358">
    <property type="entry name" value="Ribosomal_bS21"/>
    <property type="match status" value="1"/>
</dbReference>
<dbReference type="InterPro" id="IPR001911">
    <property type="entry name" value="Ribosomal_bS21"/>
</dbReference>
<dbReference type="InterPro" id="IPR018278">
    <property type="entry name" value="Ribosomal_bS21_CS"/>
</dbReference>
<dbReference type="InterPro" id="IPR038380">
    <property type="entry name" value="Ribosomal_bS21_sf"/>
</dbReference>
<dbReference type="NCBIfam" id="TIGR00030">
    <property type="entry name" value="S21p"/>
    <property type="match status" value="1"/>
</dbReference>
<dbReference type="PANTHER" id="PTHR21109">
    <property type="entry name" value="MITOCHONDRIAL 28S RIBOSOMAL PROTEIN S21"/>
    <property type="match status" value="1"/>
</dbReference>
<dbReference type="PANTHER" id="PTHR21109:SF22">
    <property type="entry name" value="SMALL RIBOSOMAL SUBUNIT PROTEIN BS21"/>
    <property type="match status" value="1"/>
</dbReference>
<dbReference type="Pfam" id="PF01165">
    <property type="entry name" value="Ribosomal_S21"/>
    <property type="match status" value="1"/>
</dbReference>
<dbReference type="PRINTS" id="PR00976">
    <property type="entry name" value="RIBOSOMALS21"/>
</dbReference>
<dbReference type="PROSITE" id="PS01181">
    <property type="entry name" value="RIBOSOMAL_S21"/>
    <property type="match status" value="1"/>
</dbReference>
<accession>Q47IP5</accession>
<sequence length="70" mass="8393">MPNIRVKENEPFEVAIRRFKRTVEKTGLLTELRAREFYEKPTTERKRKAAAAVKRQHKRLRSLTLPPKLY</sequence>
<protein>
    <recommendedName>
        <fullName evidence="1">Small ribosomal subunit protein bS21</fullName>
    </recommendedName>
    <alternativeName>
        <fullName evidence="3">30S ribosomal protein S21</fullName>
    </alternativeName>
</protein>
<reference key="1">
    <citation type="journal article" date="2009" name="BMC Genomics">
        <title>Metabolic analysis of the soil microbe Dechloromonas aromatica str. RCB: indications of a surprisingly complex life-style and cryptic anaerobic pathways for aromatic degradation.</title>
        <authorList>
            <person name="Salinero K.K."/>
            <person name="Keller K."/>
            <person name="Feil W.S."/>
            <person name="Feil H."/>
            <person name="Trong S."/>
            <person name="Di Bartolo G."/>
            <person name="Lapidus A."/>
        </authorList>
    </citation>
    <scope>NUCLEOTIDE SEQUENCE [LARGE SCALE GENOMIC DNA]</scope>
    <source>
        <strain>RCB</strain>
    </source>
</reference>
<gene>
    <name evidence="1" type="primary">rpsU</name>
    <name type="ordered locus">Daro_0529</name>
</gene>
<comment type="similarity">
    <text evidence="1">Belongs to the bacterial ribosomal protein bS21 family.</text>
</comment>
<proteinExistence type="inferred from homology"/>